<accession>P60066</accession>
<accession>Q8XFJ0</accession>
<evidence type="ECO:0000250" key="1">
    <source>
        <dbReference type="UniProtKB" id="P60061"/>
    </source>
</evidence>
<evidence type="ECO:0000250" key="2">
    <source>
        <dbReference type="UniProtKB" id="P60063"/>
    </source>
</evidence>
<evidence type="ECO:0000269" key="3">
    <source>
    </source>
</evidence>
<evidence type="ECO:0000269" key="4">
    <source>
    </source>
</evidence>
<evidence type="ECO:0000305" key="5"/>
<evidence type="ECO:0000305" key="6">
    <source>
    </source>
</evidence>
<evidence type="ECO:0007744" key="7">
    <source>
        <dbReference type="PDB" id="3NCY"/>
    </source>
</evidence>
<evidence type="ECO:0007829" key="8">
    <source>
        <dbReference type="PDB" id="3NCY"/>
    </source>
</evidence>
<sequence length="445" mass="46933">MSSDADAHKVGLIPVTLMVSGNIMGSGVFLLPANLAATGGIAIYGWLVTIIGALALSMVYAKMSSLDPSPGGSYAYARRCFGPFLGYQTNVLYWLACWIGNIAMVVIGVGYLSYFFPILKDPLVLTLTCVAVLWIFVLLNIVGPKMITRVQAVATVLALVPIVGIAVFGWFWFKGETYMAAWNVSGMNTFGAIQSTLNVTLWSFIGVESASVAAGVVKNPKRNVPIATIGGVLIAAVCYVLSTTAIMGMIPNAALRVSASPFGDAARMALGDTAGAIVSFCAAAGCLGSLGGWTLLAGQTAKAAADDGLFPPIFARVNKAGTPVAGLLIVGVLMTIFQFSSMSPNAAKEFGLVSSVSVIFTLVPYLYTCAALLLLGHGHFGKARPLYLLITFVAFVYCIWAVIGSGAKEVMWSFVTLMVITALYALNYNRIHKNPYPLDAPVKQD</sequence>
<proteinExistence type="evidence at protein level"/>
<feature type="chain" id="PRO_0000054235" description="Arginine/agmatine antiporter">
    <location>
        <begin position="1"/>
        <end position="445"/>
    </location>
</feature>
<feature type="topological domain" description="Cytoplasmic" evidence="7">
    <location>
        <begin position="1"/>
        <end position="11"/>
    </location>
</feature>
<feature type="transmembrane region" description="Helical" evidence="7">
    <location>
        <begin position="12"/>
        <end position="24"/>
    </location>
</feature>
<feature type="topological domain" description="Periplasmic" evidence="7">
    <location>
        <begin position="25"/>
        <end position="41"/>
    </location>
</feature>
<feature type="transmembrane region" description="Helical" evidence="7">
    <location>
        <begin position="42"/>
        <end position="61"/>
    </location>
</feature>
<feature type="topological domain" description="Cytoplasmic" evidence="7">
    <location>
        <begin position="62"/>
        <end position="83"/>
    </location>
</feature>
<feature type="transmembrane region" description="Helical" evidence="7">
    <location>
        <begin position="84"/>
        <end position="109"/>
    </location>
</feature>
<feature type="topological domain" description="Periplasmic" evidence="7">
    <location>
        <begin position="110"/>
        <end position="124"/>
    </location>
</feature>
<feature type="transmembrane region" description="Helical" evidence="7">
    <location>
        <begin position="125"/>
        <end position="142"/>
    </location>
</feature>
<feature type="topological domain" description="Cytoplasmic" evidence="7">
    <location>
        <begin position="143"/>
        <end position="144"/>
    </location>
</feature>
<feature type="transmembrane region" description="Helical" evidence="7">
    <location>
        <begin position="145"/>
        <end position="167"/>
    </location>
</feature>
<feature type="topological domain" description="Periplasmic" evidence="7">
    <location>
        <begin position="168"/>
        <end position="192"/>
    </location>
</feature>
<feature type="transmembrane region" description="Helical" evidence="7">
    <location>
        <begin position="193"/>
        <end position="204"/>
    </location>
</feature>
<feature type="topological domain" description="Cytoplasmic" evidence="7">
    <location>
        <begin position="205"/>
        <end position="223"/>
    </location>
</feature>
<feature type="transmembrane region" description="Helical" evidence="7">
    <location>
        <begin position="224"/>
        <end position="243"/>
    </location>
</feature>
<feature type="topological domain" description="Periplasmic" evidence="7">
    <location>
        <begin position="244"/>
        <end position="276"/>
    </location>
</feature>
<feature type="transmembrane region" description="Helical" evidence="7">
    <location>
        <begin position="277"/>
        <end position="301"/>
    </location>
</feature>
<feature type="topological domain" description="Cytoplasmic" evidence="7">
    <location>
        <begin position="302"/>
        <end position="325"/>
    </location>
</feature>
<feature type="transmembrane region" description="Helical" evidence="7">
    <location>
        <begin position="326"/>
        <end position="342"/>
    </location>
</feature>
<feature type="topological domain" description="Periplasmic" evidence="7">
    <location>
        <begin position="343"/>
        <end position="349"/>
    </location>
</feature>
<feature type="transmembrane region" description="Helical" evidence="7">
    <location>
        <begin position="350"/>
        <end position="373"/>
    </location>
</feature>
<feature type="topological domain" description="Cytoplasmic" evidence="7">
    <location>
        <begin position="374"/>
        <end position="384"/>
    </location>
</feature>
<feature type="transmembrane region" description="Helical" evidence="7">
    <location>
        <begin position="385"/>
        <end position="404"/>
    </location>
</feature>
<feature type="topological domain" description="Periplasmic" evidence="7">
    <location>
        <begin position="405"/>
        <end position="408"/>
    </location>
</feature>
<feature type="transmembrane region" description="Helical" evidence="7">
    <location>
        <begin position="409"/>
        <end position="427"/>
    </location>
</feature>
<feature type="topological domain" description="Cytoplasmic" evidence="7">
    <location>
        <begin position="428"/>
        <end position="445"/>
    </location>
</feature>
<feature type="binding site" evidence="1">
    <location>
        <position position="23"/>
    </location>
    <ligand>
        <name>agmatine</name>
        <dbReference type="ChEBI" id="CHEBI:58145"/>
    </ligand>
</feature>
<feature type="binding site" evidence="1">
    <location>
        <position position="23"/>
    </location>
    <ligand>
        <name>L-arginine</name>
        <dbReference type="ChEBI" id="CHEBI:32682"/>
    </ligand>
</feature>
<feature type="binding site" evidence="1">
    <location>
        <position position="26"/>
    </location>
    <ligand>
        <name>L-arginine</name>
        <dbReference type="ChEBI" id="CHEBI:32682"/>
    </ligand>
</feature>
<feature type="binding site" evidence="1">
    <location>
        <position position="96"/>
    </location>
    <ligand>
        <name>agmatine</name>
        <dbReference type="ChEBI" id="CHEBI:58145"/>
    </ligand>
</feature>
<feature type="binding site" evidence="1">
    <location>
        <position position="96"/>
    </location>
    <ligand>
        <name>L-arginine</name>
        <dbReference type="ChEBI" id="CHEBI:32682"/>
    </ligand>
</feature>
<feature type="binding site" evidence="1">
    <location>
        <position position="97"/>
    </location>
    <ligand>
        <name>agmatine</name>
        <dbReference type="ChEBI" id="CHEBI:58145"/>
    </ligand>
</feature>
<feature type="binding site" evidence="1">
    <location>
        <position position="101"/>
    </location>
    <ligand>
        <name>agmatine</name>
        <dbReference type="ChEBI" id="CHEBI:58145"/>
    </ligand>
</feature>
<feature type="binding site" evidence="1">
    <location>
        <position position="202"/>
    </location>
    <ligand>
        <name>L-arginine</name>
        <dbReference type="ChEBI" id="CHEBI:32682"/>
    </ligand>
</feature>
<feature type="binding site" evidence="1">
    <location>
        <position position="205"/>
    </location>
    <ligand>
        <name>agmatine</name>
        <dbReference type="ChEBI" id="CHEBI:58145"/>
    </ligand>
</feature>
<feature type="binding site" evidence="1">
    <location>
        <position position="205"/>
    </location>
    <ligand>
        <name>L-arginine</name>
        <dbReference type="ChEBI" id="CHEBI:32682"/>
    </ligand>
</feature>
<feature type="binding site" evidence="1">
    <location>
        <position position="293"/>
    </location>
    <ligand>
        <name>agmatine</name>
        <dbReference type="ChEBI" id="CHEBI:58145"/>
    </ligand>
</feature>
<feature type="binding site" evidence="1">
    <location>
        <position position="357"/>
    </location>
    <ligand>
        <name>L-arginine</name>
        <dbReference type="ChEBI" id="CHEBI:32682"/>
    </ligand>
</feature>
<feature type="site" description="Cytoplasmic (distal) gate" evidence="2">
    <location>
        <position position="93"/>
    </location>
</feature>
<feature type="site" description="Periplasmic (proximal) gate" evidence="2">
    <location>
        <position position="202"/>
    </location>
</feature>
<feature type="site" description="Cytoplasmic (distal) gate" evidence="2">
    <location>
        <position position="208"/>
    </location>
</feature>
<feature type="site" description="Middle gate" evidence="2">
    <location>
        <position position="293"/>
    </location>
</feature>
<feature type="site" description="Cytoplasmic (distal) gate" evidence="2">
    <location>
        <position position="365"/>
    </location>
</feature>
<feature type="helix" evidence="8">
    <location>
        <begin position="13"/>
        <end position="21"/>
    </location>
</feature>
<feature type="turn" evidence="8">
    <location>
        <begin position="27"/>
        <end position="29"/>
    </location>
</feature>
<feature type="helix" evidence="8">
    <location>
        <begin position="30"/>
        <end position="35"/>
    </location>
</feature>
<feature type="strand" evidence="8">
    <location>
        <begin position="39"/>
        <end position="42"/>
    </location>
</feature>
<feature type="helix" evidence="8">
    <location>
        <begin position="43"/>
        <end position="66"/>
    </location>
</feature>
<feature type="helix" evidence="8">
    <location>
        <begin position="74"/>
        <end position="81"/>
    </location>
</feature>
<feature type="helix" evidence="8">
    <location>
        <begin position="84"/>
        <end position="98"/>
    </location>
</feature>
<feature type="turn" evidence="8">
    <location>
        <begin position="99"/>
        <end position="101"/>
    </location>
</feature>
<feature type="helix" evidence="8">
    <location>
        <begin position="102"/>
        <end position="109"/>
    </location>
</feature>
<feature type="turn" evidence="8">
    <location>
        <begin position="110"/>
        <end position="114"/>
    </location>
</feature>
<feature type="helix" evidence="8">
    <location>
        <begin position="122"/>
        <end position="140"/>
    </location>
</feature>
<feature type="helix" evidence="8">
    <location>
        <begin position="144"/>
        <end position="164"/>
    </location>
</feature>
<feature type="strand" evidence="8">
    <location>
        <begin position="184"/>
        <end position="186"/>
    </location>
</feature>
<feature type="helix" evidence="8">
    <location>
        <begin position="189"/>
        <end position="200"/>
    </location>
</feature>
<feature type="helix" evidence="8">
    <location>
        <begin position="201"/>
        <end position="204"/>
    </location>
</feature>
<feature type="turn" evidence="8">
    <location>
        <begin position="205"/>
        <end position="208"/>
    </location>
</feature>
<feature type="helix" evidence="8">
    <location>
        <begin position="209"/>
        <end position="213"/>
    </location>
</feature>
<feature type="strand" evidence="8">
    <location>
        <begin position="216"/>
        <end position="219"/>
    </location>
</feature>
<feature type="turn" evidence="8">
    <location>
        <begin position="220"/>
        <end position="222"/>
    </location>
</feature>
<feature type="helix" evidence="8">
    <location>
        <begin position="223"/>
        <end position="240"/>
    </location>
</feature>
<feature type="turn" evidence="8">
    <location>
        <begin position="244"/>
        <end position="246"/>
    </location>
</feature>
<feature type="strand" evidence="8">
    <location>
        <begin position="247"/>
        <end position="249"/>
    </location>
</feature>
<feature type="helix" evidence="8">
    <location>
        <begin position="254"/>
        <end position="257"/>
    </location>
</feature>
<feature type="helix" evidence="8">
    <location>
        <begin position="264"/>
        <end position="266"/>
    </location>
</feature>
<feature type="turn" evidence="8">
    <location>
        <begin position="268"/>
        <end position="271"/>
    </location>
</feature>
<feature type="helix" evidence="8">
    <location>
        <begin position="278"/>
        <end position="281"/>
    </location>
</feature>
<feature type="helix" evidence="8">
    <location>
        <begin position="284"/>
        <end position="305"/>
    </location>
</feature>
<feature type="turn" evidence="8">
    <location>
        <begin position="306"/>
        <end position="308"/>
    </location>
</feature>
<feature type="helix" evidence="8">
    <location>
        <begin position="312"/>
        <end position="314"/>
    </location>
</feature>
<feature type="strand" evidence="8">
    <location>
        <begin position="317"/>
        <end position="319"/>
    </location>
</feature>
<feature type="helix" evidence="8">
    <location>
        <begin position="327"/>
        <end position="342"/>
    </location>
</feature>
<feature type="strand" evidence="8">
    <location>
        <begin position="343"/>
        <end position="345"/>
    </location>
</feature>
<feature type="helix" evidence="8">
    <location>
        <begin position="348"/>
        <end position="360"/>
    </location>
</feature>
<feature type="helix" evidence="8">
    <location>
        <begin position="362"/>
        <end position="374"/>
    </location>
</feature>
<feature type="strand" evidence="8">
    <location>
        <begin position="376"/>
        <end position="378"/>
    </location>
</feature>
<feature type="turn" evidence="8">
    <location>
        <begin position="379"/>
        <end position="382"/>
    </location>
</feature>
<feature type="helix" evidence="8">
    <location>
        <begin position="384"/>
        <end position="403"/>
    </location>
</feature>
<feature type="helix" evidence="8">
    <location>
        <begin position="407"/>
        <end position="425"/>
    </location>
</feature>
<feature type="turn" evidence="8">
    <location>
        <begin position="429"/>
        <end position="431"/>
    </location>
</feature>
<gene>
    <name type="primary">adiC</name>
    <name type="synonym">aniC</name>
    <name type="ordered locus">STM4294</name>
</gene>
<reference key="1">
    <citation type="journal article" date="2001" name="Nature">
        <title>Complete genome sequence of Salmonella enterica serovar Typhimurium LT2.</title>
        <authorList>
            <person name="McClelland M."/>
            <person name="Sanderson K.E."/>
            <person name="Spieth J."/>
            <person name="Clifton S.W."/>
            <person name="Latreille P."/>
            <person name="Courtney L."/>
            <person name="Porwollik S."/>
            <person name="Ali J."/>
            <person name="Dante M."/>
            <person name="Du F."/>
            <person name="Hou S."/>
            <person name="Layman D."/>
            <person name="Leonard S."/>
            <person name="Nguyen C."/>
            <person name="Scott K."/>
            <person name="Holmes A."/>
            <person name="Grewal N."/>
            <person name="Mulvaney E."/>
            <person name="Ryan E."/>
            <person name="Sun H."/>
            <person name="Florea L."/>
            <person name="Miller W."/>
            <person name="Stoneking T."/>
            <person name="Nhan M."/>
            <person name="Waterston R."/>
            <person name="Wilson R.K."/>
        </authorList>
    </citation>
    <scope>NUCLEOTIDE SEQUENCE [LARGE SCALE GENOMIC DNA]</scope>
    <source>
        <strain>LT2 / SGSC1412 / ATCC 700720</strain>
    </source>
</reference>
<reference key="2">
    <citation type="journal article" date="1999" name="J. Bacteriol.">
        <title>Cyclic AMP receptor protein and TyrR are required for acid pH and anaerobic induction of hyaB and aniC in Salmonella typhimurium.</title>
        <authorList>
            <person name="Park K.R."/>
            <person name="Giard J.-C."/>
            <person name="Eom J.H."/>
            <person name="Bearson S."/>
            <person name="Foster J.W."/>
        </authorList>
    </citation>
    <scope>INDUCTION</scope>
    <source>
        <strain>UK-1</strain>
    </source>
</reference>
<reference evidence="7" key="3">
    <citation type="journal article" date="2009" name="Nature">
        <title>Structure of a prokaryotic virtual proton pump at 3.2 A resolution.</title>
        <authorList>
            <person name="Fang Y."/>
            <person name="Jayaram H."/>
            <person name="Shane T."/>
            <person name="Kolmakova-Partensky L."/>
            <person name="Wu F."/>
            <person name="Williams C."/>
            <person name="Xiong Y."/>
            <person name="Miller C."/>
        </authorList>
    </citation>
    <scope>X-RAY CRYSTALLOGRAPHY (3.2 ANGSTROMS) IN OUTWARD-OPEN CONFORMATION</scope>
    <scope>FUNCTION</scope>
    <scope>SUBUNIT</scope>
    <scope>SUBCELLULAR LOCATION</scope>
    <scope>DOMAIN</scope>
</reference>
<comment type="function">
    <text evidence="2 3 6">Major component of the acid-resistance (AR) system allowing enteric pathogens to survive the acidic environment in the stomach (Probable). Exchanges extracellular arginine for its intracellular decarboxylation product agmatine (Agm) thereby expelling intracellular protons (PubMed:19578361). Probably undergoes several conformational states in order to translocate the substrate across the membrane; keeps the substrate accessible to only 1 side of the membrane at a time by opening and closing 3 membrane-internal gates (By similarity).</text>
</comment>
<comment type="catalytic activity">
    <reaction evidence="6">
        <text>agmatine(in) + L-arginine(out) = agmatine(out) + L-arginine(in)</text>
        <dbReference type="Rhea" id="RHEA:29651"/>
        <dbReference type="ChEBI" id="CHEBI:32682"/>
        <dbReference type="ChEBI" id="CHEBI:58145"/>
    </reaction>
</comment>
<comment type="subunit">
    <text evidence="3">Homodimer; each subunit has its own individual transport capacity.</text>
</comment>
<comment type="interaction">
    <interactant intactId="EBI-15792734">
        <id>P60066</id>
    </interactant>
    <interactant intactId="EBI-15792734">
        <id>P60066</id>
        <label>adiC</label>
    </interactant>
    <organismsDiffer>false</organismsDiffer>
    <experiments>2</experiments>
</comment>
<comment type="subcellular location">
    <subcellularLocation>
        <location evidence="6">Cell inner membrane</location>
        <topology evidence="3">Multi-pass membrane protein</topology>
    </subcellularLocation>
</comment>
<comment type="induction">
    <text evidence="4">Maximum induction requires anaerobiosis, acidic conditions and tyrosine.</text>
</comment>
<comment type="domain">
    <text evidence="3">Each subunit has 12 transmembrane (TM) helices; TM1 and TM6 are interrupted by short non-helical Gly-rich loops in the middle of their transmembrane spans. TM11 and TM12 provide most of the homodimerization interface. Each subunit has a central cavity which probably binds substrate.</text>
</comment>
<comment type="similarity">
    <text evidence="5">Belongs to the amino acid-polyamine-organocation (APC) superfamily. Basic amino acid/polyamine antiporter (APA) (TC 2.A.3.2) family.</text>
</comment>
<dbReference type="EMBL" id="AE006468">
    <property type="protein sequence ID" value="AAL23118.1"/>
    <property type="molecule type" value="Genomic_DNA"/>
</dbReference>
<dbReference type="RefSeq" id="WP_000093130.1">
    <property type="nucleotide sequence ID" value="NC_003197.2"/>
</dbReference>
<dbReference type="PDB" id="3NCY">
    <property type="method" value="X-ray"/>
    <property type="resolution" value="3.20 A"/>
    <property type="chains" value="A/B/C/D=1-445"/>
</dbReference>
<dbReference type="PDBsum" id="3NCY"/>
<dbReference type="SMR" id="P60066"/>
<dbReference type="DIP" id="DIP-59280N"/>
<dbReference type="STRING" id="99287.STM4294"/>
<dbReference type="PaxDb" id="99287-STM4294"/>
<dbReference type="ABCD" id="P60066">
    <property type="antibodies" value="1 sequenced antibody"/>
</dbReference>
<dbReference type="GeneID" id="66758511"/>
<dbReference type="KEGG" id="stm:STM4294"/>
<dbReference type="PATRIC" id="fig|99287.12.peg.4516"/>
<dbReference type="HOGENOM" id="CLU_007946_1_0_6"/>
<dbReference type="OMA" id="WVSNAAL"/>
<dbReference type="PhylomeDB" id="P60066"/>
<dbReference type="BioCyc" id="SENT99287:STM4294-MONOMER"/>
<dbReference type="EvolutionaryTrace" id="P60066"/>
<dbReference type="Proteomes" id="UP000001014">
    <property type="component" value="Chromosome"/>
</dbReference>
<dbReference type="GO" id="GO:0005886">
    <property type="term" value="C:plasma membrane"/>
    <property type="evidence" value="ECO:0007669"/>
    <property type="project" value="UniProtKB-SubCell"/>
</dbReference>
<dbReference type="GO" id="GO:0015297">
    <property type="term" value="F:antiporter activity"/>
    <property type="evidence" value="ECO:0007669"/>
    <property type="project" value="UniProtKB-KW"/>
</dbReference>
<dbReference type="GO" id="GO:0042802">
    <property type="term" value="F:identical protein binding"/>
    <property type="evidence" value="ECO:0000353"/>
    <property type="project" value="IntAct"/>
</dbReference>
<dbReference type="GO" id="GO:0006865">
    <property type="term" value="P:amino acid transport"/>
    <property type="evidence" value="ECO:0007669"/>
    <property type="project" value="UniProtKB-KW"/>
</dbReference>
<dbReference type="FunFam" id="1.20.1740.10:FF:000011">
    <property type="entry name" value="Arginine/agmatine antiporter"/>
    <property type="match status" value="1"/>
</dbReference>
<dbReference type="Gene3D" id="1.20.1740.10">
    <property type="entry name" value="Amino acid/polyamine transporter I"/>
    <property type="match status" value="1"/>
</dbReference>
<dbReference type="InterPro" id="IPR002293">
    <property type="entry name" value="AA/rel_permease1"/>
</dbReference>
<dbReference type="InterPro" id="IPR050367">
    <property type="entry name" value="APC_superfamily"/>
</dbReference>
<dbReference type="NCBIfam" id="NF007929">
    <property type="entry name" value="PRK10644.1"/>
    <property type="match status" value="1"/>
</dbReference>
<dbReference type="PANTHER" id="PTHR42770">
    <property type="entry name" value="AMINO ACID TRANSPORTER-RELATED"/>
    <property type="match status" value="1"/>
</dbReference>
<dbReference type="PANTHER" id="PTHR42770:SF18">
    <property type="entry name" value="ARGININE_AGMATINE ANTIPORTER"/>
    <property type="match status" value="1"/>
</dbReference>
<dbReference type="Pfam" id="PF13520">
    <property type="entry name" value="AA_permease_2"/>
    <property type="match status" value="1"/>
</dbReference>
<dbReference type="PIRSF" id="PIRSF006060">
    <property type="entry name" value="AA_transporter"/>
    <property type="match status" value="1"/>
</dbReference>
<keyword id="KW-0002">3D-structure</keyword>
<keyword id="KW-0029">Amino-acid transport</keyword>
<keyword id="KW-0050">Antiport</keyword>
<keyword id="KW-0997">Cell inner membrane</keyword>
<keyword id="KW-1003">Cell membrane</keyword>
<keyword id="KW-0472">Membrane</keyword>
<keyword id="KW-1185">Reference proteome</keyword>
<keyword id="KW-0812">Transmembrane</keyword>
<keyword id="KW-1133">Transmembrane helix</keyword>
<keyword id="KW-0813">Transport</keyword>
<organism>
    <name type="scientific">Salmonella typhimurium (strain LT2 / SGSC1412 / ATCC 700720)</name>
    <dbReference type="NCBI Taxonomy" id="99287"/>
    <lineage>
        <taxon>Bacteria</taxon>
        <taxon>Pseudomonadati</taxon>
        <taxon>Pseudomonadota</taxon>
        <taxon>Gammaproteobacteria</taxon>
        <taxon>Enterobacterales</taxon>
        <taxon>Enterobacteriaceae</taxon>
        <taxon>Salmonella</taxon>
    </lineage>
</organism>
<protein>
    <recommendedName>
        <fullName>Arginine/agmatine antiporter</fullName>
    </recommendedName>
</protein>
<name>ADIC_SALTY</name>